<comment type="function">
    <text evidence="1">HflC and HflK could encode or regulate a protease.</text>
</comment>
<comment type="subunit">
    <text evidence="1">HflC and HflK may interact to form a multimeric complex.</text>
</comment>
<comment type="subcellular location">
    <subcellularLocation>
        <location evidence="4">Membrane</location>
        <topology evidence="4">Single-pass membrane protein</topology>
    </subcellularLocation>
</comment>
<comment type="similarity">
    <text evidence="4">Belongs to the band 7/mec-2 family. HflK subfamily.</text>
</comment>
<dbReference type="EMBL" id="L42023">
    <property type="protein sequence ID" value="AAC21822.1"/>
    <property type="molecule type" value="Genomic_DNA"/>
</dbReference>
<dbReference type="PIR" id="A64051">
    <property type="entry name" value="A64051"/>
</dbReference>
<dbReference type="RefSeq" id="NP_438321.1">
    <property type="nucleotide sequence ID" value="NC_000907.1"/>
</dbReference>
<dbReference type="SMR" id="P44546"/>
<dbReference type="STRING" id="71421.HI_0151"/>
<dbReference type="EnsemblBacteria" id="AAC21822">
    <property type="protein sequence ID" value="AAC21822"/>
    <property type="gene ID" value="HI_0151"/>
</dbReference>
<dbReference type="KEGG" id="hin:HI_0151"/>
<dbReference type="PATRIC" id="fig|71421.8.peg.154"/>
<dbReference type="eggNOG" id="COG0330">
    <property type="taxonomic scope" value="Bacteria"/>
</dbReference>
<dbReference type="HOGENOM" id="CLU_039173_1_0_6"/>
<dbReference type="OrthoDB" id="9779595at2"/>
<dbReference type="PhylomeDB" id="P44546"/>
<dbReference type="BioCyc" id="HINF71421:G1GJ1-163-MONOMER"/>
<dbReference type="Proteomes" id="UP000000579">
    <property type="component" value="Chromosome"/>
</dbReference>
<dbReference type="GO" id="GO:0016020">
    <property type="term" value="C:membrane"/>
    <property type="evidence" value="ECO:0007669"/>
    <property type="project" value="UniProtKB-SubCell"/>
</dbReference>
<dbReference type="CDD" id="cd03404">
    <property type="entry name" value="SPFH_HflK"/>
    <property type="match status" value="1"/>
</dbReference>
<dbReference type="Gene3D" id="3.30.479.30">
    <property type="entry name" value="Band 7 domain"/>
    <property type="match status" value="1"/>
</dbReference>
<dbReference type="InterPro" id="IPR050710">
    <property type="entry name" value="Band7/mec-2_domain"/>
</dbReference>
<dbReference type="InterPro" id="IPR001107">
    <property type="entry name" value="Band_7"/>
</dbReference>
<dbReference type="InterPro" id="IPR036013">
    <property type="entry name" value="Band_7/SPFH_dom_sf"/>
</dbReference>
<dbReference type="InterPro" id="IPR010201">
    <property type="entry name" value="HflK"/>
</dbReference>
<dbReference type="InterPro" id="IPR001972">
    <property type="entry name" value="Stomatin_HflK_fam"/>
</dbReference>
<dbReference type="NCBIfam" id="TIGR01933">
    <property type="entry name" value="hflK"/>
    <property type="match status" value="1"/>
</dbReference>
<dbReference type="PANTHER" id="PTHR43327:SF2">
    <property type="entry name" value="MODULATOR OF FTSH PROTEASE HFLK"/>
    <property type="match status" value="1"/>
</dbReference>
<dbReference type="PANTHER" id="PTHR43327">
    <property type="entry name" value="STOMATIN-LIKE PROTEIN 2, MITOCHONDRIAL"/>
    <property type="match status" value="1"/>
</dbReference>
<dbReference type="Pfam" id="PF01145">
    <property type="entry name" value="Band_7"/>
    <property type="match status" value="1"/>
</dbReference>
<dbReference type="PRINTS" id="PR00721">
    <property type="entry name" value="STOMATIN"/>
</dbReference>
<dbReference type="SMART" id="SM00244">
    <property type="entry name" value="PHB"/>
    <property type="match status" value="1"/>
</dbReference>
<dbReference type="SUPFAM" id="SSF117892">
    <property type="entry name" value="Band 7/SPFH domain"/>
    <property type="match status" value="1"/>
</dbReference>
<feature type="chain" id="PRO_0000094087" description="Protein HflK">
    <location>
        <begin position="1"/>
        <end position="410"/>
    </location>
</feature>
<feature type="transmembrane region" description="Helical" evidence="2">
    <location>
        <begin position="87"/>
        <end position="107"/>
    </location>
</feature>
<feature type="region of interest" description="Disordered" evidence="3">
    <location>
        <begin position="1"/>
        <end position="49"/>
    </location>
</feature>
<feature type="region of interest" description="Disordered" evidence="3">
    <location>
        <begin position="374"/>
        <end position="410"/>
    </location>
</feature>
<feature type="compositionally biased region" description="Low complexity" evidence="3">
    <location>
        <begin position="19"/>
        <end position="47"/>
    </location>
</feature>
<feature type="compositionally biased region" description="Polar residues" evidence="3">
    <location>
        <begin position="374"/>
        <end position="400"/>
    </location>
</feature>
<keyword id="KW-0472">Membrane</keyword>
<keyword id="KW-1185">Reference proteome</keyword>
<keyword id="KW-0812">Transmembrane</keyword>
<keyword id="KW-1133">Transmembrane helix</keyword>
<organism>
    <name type="scientific">Haemophilus influenzae (strain ATCC 51907 / DSM 11121 / KW20 / Rd)</name>
    <dbReference type="NCBI Taxonomy" id="71421"/>
    <lineage>
        <taxon>Bacteria</taxon>
        <taxon>Pseudomonadati</taxon>
        <taxon>Pseudomonadota</taxon>
        <taxon>Gammaproteobacteria</taxon>
        <taxon>Pasteurellales</taxon>
        <taxon>Pasteurellaceae</taxon>
        <taxon>Haemophilus</taxon>
    </lineage>
</organism>
<proteinExistence type="inferred from homology"/>
<evidence type="ECO:0000250" key="1"/>
<evidence type="ECO:0000255" key="2"/>
<evidence type="ECO:0000256" key="3">
    <source>
        <dbReference type="SAM" id="MobiDB-lite"/>
    </source>
</evidence>
<evidence type="ECO:0000305" key="4"/>
<sequence length="410" mass="45806">MENEMSQNGSDRDPWSKPGQSNDQQPGNSSNNNGWNNNQNRGNQEQSPPDIEEIFNNLLKKLGGGNKKSGQNNGSSQGNTPFHFGKVIPLAVAIGAIIWGVNGFYTIKEAERGVVLRFGELHSIVQPGLNWKPTFVDKVLPVNVEQVKELRTQGAMLTQDENMVKVEMTVQYRVQDPAKYLFSVTNADDSLNQATDSALRYVIGHMSMNDILTTGRSVVRENTWKALNEIIKSYDMGLEVIDVNFQSARPPEEVKDAFDDAIKAQEDEQRFIREAEAYAREKEPIARGDAQRILEEATAYKDRIVLDAKGEVERLQRLLPEFKAAPDLLRERLYIQTMEKVMANTPKVMLDGNNGNNLTVLPLEQIMGKKSVTSAPSAVNSSPAFTAPERQNSYQPQPTTVAPIRQGRFN</sequence>
<protein>
    <recommendedName>
        <fullName>Protein HflK</fullName>
    </recommendedName>
</protein>
<reference key="1">
    <citation type="journal article" date="1995" name="Science">
        <title>Whole-genome random sequencing and assembly of Haemophilus influenzae Rd.</title>
        <authorList>
            <person name="Fleischmann R.D."/>
            <person name="Adams M.D."/>
            <person name="White O."/>
            <person name="Clayton R.A."/>
            <person name="Kirkness E.F."/>
            <person name="Kerlavage A.R."/>
            <person name="Bult C.J."/>
            <person name="Tomb J.-F."/>
            <person name="Dougherty B.A."/>
            <person name="Merrick J.M."/>
            <person name="McKenney K."/>
            <person name="Sutton G.G."/>
            <person name="FitzHugh W."/>
            <person name="Fields C.A."/>
            <person name="Gocayne J.D."/>
            <person name="Scott J.D."/>
            <person name="Shirley R."/>
            <person name="Liu L.-I."/>
            <person name="Glodek A."/>
            <person name="Kelley J.M."/>
            <person name="Weidman J.F."/>
            <person name="Phillips C.A."/>
            <person name="Spriggs T."/>
            <person name="Hedblom E."/>
            <person name="Cotton M.D."/>
            <person name="Utterback T.R."/>
            <person name="Hanna M.C."/>
            <person name="Nguyen D.T."/>
            <person name="Saudek D.M."/>
            <person name="Brandon R.C."/>
            <person name="Fine L.D."/>
            <person name="Fritchman J.L."/>
            <person name="Fuhrmann J.L."/>
            <person name="Geoghagen N.S.M."/>
            <person name="Gnehm C.L."/>
            <person name="McDonald L.A."/>
            <person name="Small K.V."/>
            <person name="Fraser C.M."/>
            <person name="Smith H.O."/>
            <person name="Venter J.C."/>
        </authorList>
    </citation>
    <scope>NUCLEOTIDE SEQUENCE [LARGE SCALE GENOMIC DNA]</scope>
    <source>
        <strain>ATCC 51907 / DSM 11121 / KW20 / Rd</strain>
    </source>
</reference>
<gene>
    <name type="primary">hflK</name>
    <name type="ordered locus">HI_0151</name>
</gene>
<name>HFLK_HAEIN</name>
<accession>P44546</accession>